<comment type="function">
    <text evidence="1 3 6 7">Subunit of the V0 complex of vacuolar(H+)-ATPase (V-ATPase), a multisubunit enzyme composed of a peripheral complex (V1) that hydrolyzes ATP and a membrane integral complex (V0) that translocates protons (By similarity). V-ATPase is responsible for acidifying and maintaining the pH of intracellular compartments and in some cell types, is targeted to the plasma membrane, where it is responsible for acidifying the extracellular environment (By similarity). Involved in normal vectorial acid transport into the urine by the kidney (PubMed:10973252, PubMed:12414817).</text>
</comment>
<comment type="subunit">
    <text evidence="2 3">V-ATPase is a heteromultimeric enzyme made up of two complexes: the ATP-hydrolytic V1 complex and the proton translocation V0 complex (By similarity). The V1 complex consists of three catalytic AB heterodimers that form a heterohexamer, three peripheral stalks each consisting of EG heterodimers, one central rotor including subunits D and F, and the regulatory subunits C and H (By similarity). The proton translocation complex V0 consists of the proton transport subunit a, a ring of proteolipid subunits c9c'', rotary subunit d, subunits e and f, and the accessory subunits ATP6AP1/Ac45 and ATP6AP2/PRR (By similarity). Interacts with the V1 complex V-ATPase subunit A ATP6V1A (By similarity). Interacts with the V0 complex V-ATPase subunit c ATP6V0C (By similarity).</text>
</comment>
<comment type="interaction">
    <interactant intactId="EBI-25832286">
        <id>Q9HBG4</id>
    </interactant>
    <interactant intactId="EBI-1222467">
        <id>P02649</id>
        <label>APOE</label>
    </interactant>
    <organismsDiffer>false</organismsDiffer>
    <experiments>3</experiments>
</comment>
<comment type="subcellular location">
    <subcellularLocation>
        <location evidence="6">Apical cell membrane</location>
        <topology evidence="4">Multi-pass membrane protein</topology>
    </subcellularLocation>
    <subcellularLocation>
        <location evidence="2">Basolateral cell membrane</location>
        <topology evidence="4">Multi-pass membrane protein</topology>
    </subcellularLocation>
    <text evidence="2 6">Localizes to the apical surface of alpha-intercalated cells in the cortical collecting ducts of the distal nephron (PubMed:10973252). Localizes to the basolateral surface of beta-intercalated cells in the cortical collecting ducts of the distal nephron (By similarity).</text>
</comment>
<comment type="tissue specificity">
    <text evidence="7">Expressed in adult and fetal kidney. Found in the inner ear.</text>
</comment>
<comment type="disease" evidence="6 7">
    <disease id="DI-01496">
        <name>Renal tubular acidosis, distal, 3, with or without sensorineural hearing loss</name>
        <acronym>DRTA3</acronym>
        <description>An autosomal recessive disease characterized by reduced ability to acidify urine, variable hyperchloremic hypokalemic metabolic acidosis, nephrocalcinosis, and nephrolithiasis. It is due to functional failure of alpha-intercalated cells of the cortical collecting duct of the distal nephron, where vectorial proton transport is required for urinary acidification.</description>
        <dbReference type="MIM" id="602722"/>
    </disease>
    <text>The disease is caused by variants affecting the gene represented in this entry.</text>
</comment>
<comment type="similarity">
    <text evidence="9">Belongs to the V-ATPase 116 kDa subunit family.</text>
</comment>
<dbReference type="EMBL" id="AF245517">
    <property type="protein sequence ID" value="AAG11415.1"/>
    <property type="molecule type" value="mRNA"/>
</dbReference>
<dbReference type="EMBL" id="AK292945">
    <property type="protein sequence ID" value="BAF85634.1"/>
    <property type="molecule type" value="mRNA"/>
</dbReference>
<dbReference type="EMBL" id="AC018663">
    <property type="status" value="NOT_ANNOTATED_CDS"/>
    <property type="molecule type" value="Genomic_DNA"/>
</dbReference>
<dbReference type="EMBL" id="AC020983">
    <property type="status" value="NOT_ANNOTATED_CDS"/>
    <property type="molecule type" value="Genomic_DNA"/>
</dbReference>
<dbReference type="EMBL" id="CH236950">
    <property type="protein sequence ID" value="EAL24043.1"/>
    <property type="molecule type" value="Genomic_DNA"/>
</dbReference>
<dbReference type="EMBL" id="CH471070">
    <property type="protein sequence ID" value="EAW83892.1"/>
    <property type="molecule type" value="Genomic_DNA"/>
</dbReference>
<dbReference type="EMBL" id="BC109304">
    <property type="protein sequence ID" value="AAI09305.1"/>
    <property type="molecule type" value="mRNA"/>
</dbReference>
<dbReference type="EMBL" id="BC109305">
    <property type="protein sequence ID" value="AAI09306.1"/>
    <property type="molecule type" value="mRNA"/>
</dbReference>
<dbReference type="CCDS" id="CCDS5849.1"/>
<dbReference type="RefSeq" id="NP_065683.2">
    <property type="nucleotide sequence ID" value="NM_020632.3"/>
</dbReference>
<dbReference type="RefSeq" id="NP_570855.2">
    <property type="nucleotide sequence ID" value="NM_130840.3"/>
</dbReference>
<dbReference type="RefSeq" id="NP_570856.2">
    <property type="nucleotide sequence ID" value="NM_130841.3"/>
</dbReference>
<dbReference type="RefSeq" id="XP_005250450.1">
    <property type="nucleotide sequence ID" value="XM_005250393.1"/>
</dbReference>
<dbReference type="RefSeq" id="XP_005250451.1">
    <property type="nucleotide sequence ID" value="XM_005250394.3"/>
</dbReference>
<dbReference type="PDB" id="7UNF">
    <property type="method" value="EM"/>
    <property type="resolution" value="4.08 A"/>
    <property type="chains" value="a=1-840"/>
</dbReference>
<dbReference type="PDBsum" id="7UNF"/>
<dbReference type="EMDB" id="EMD-26623"/>
<dbReference type="SMR" id="Q9HBG4"/>
<dbReference type="BioGRID" id="119097">
    <property type="interactions" value="27"/>
</dbReference>
<dbReference type="ComplexPortal" id="CPX-6912">
    <property type="entry name" value="Vacuolar proton translocating ATPase complex, ATP6V0A4 variant"/>
</dbReference>
<dbReference type="FunCoup" id="Q9HBG4">
    <property type="interactions" value="524"/>
</dbReference>
<dbReference type="IntAct" id="Q9HBG4">
    <property type="interactions" value="17"/>
</dbReference>
<dbReference type="STRING" id="9606.ENSP00000308122"/>
<dbReference type="DrugBank" id="DB01133">
    <property type="generic name" value="Tiludronic acid"/>
</dbReference>
<dbReference type="TCDB" id="3.A.2.2.4">
    <property type="family name" value="the h+- or na+-translocating f-type, v-type and a-type atpase (f-atpase) superfamily"/>
</dbReference>
<dbReference type="GlyGen" id="Q9HBG4">
    <property type="glycosylation" value="1 site"/>
</dbReference>
<dbReference type="iPTMnet" id="Q9HBG4"/>
<dbReference type="PhosphoSitePlus" id="Q9HBG4"/>
<dbReference type="BioMuta" id="ATP6V0A4"/>
<dbReference type="DMDM" id="308153516"/>
<dbReference type="jPOST" id="Q9HBG4"/>
<dbReference type="MassIVE" id="Q9HBG4"/>
<dbReference type="PaxDb" id="9606-ENSP00000308122"/>
<dbReference type="PeptideAtlas" id="Q9HBG4"/>
<dbReference type="ProteomicsDB" id="81539"/>
<dbReference type="Antibodypedia" id="3120">
    <property type="antibodies" value="125 antibodies from 23 providers"/>
</dbReference>
<dbReference type="DNASU" id="50617"/>
<dbReference type="Ensembl" id="ENST00000310018.7">
    <property type="protein sequence ID" value="ENSP00000308122.2"/>
    <property type="gene ID" value="ENSG00000105929.16"/>
</dbReference>
<dbReference type="Ensembl" id="ENST00000353492.4">
    <property type="protein sequence ID" value="ENSP00000253856.6"/>
    <property type="gene ID" value="ENSG00000105929.16"/>
</dbReference>
<dbReference type="Ensembl" id="ENST00000393054.5">
    <property type="protein sequence ID" value="ENSP00000376774.1"/>
    <property type="gene ID" value="ENSG00000105929.16"/>
</dbReference>
<dbReference type="Ensembl" id="ENST00000645515.1">
    <property type="protein sequence ID" value="ENSP00000496421.1"/>
    <property type="gene ID" value="ENSG00000105929.16"/>
</dbReference>
<dbReference type="GeneID" id="50617"/>
<dbReference type="KEGG" id="hsa:50617"/>
<dbReference type="MANE-Select" id="ENST00000310018.7">
    <property type="protein sequence ID" value="ENSP00000308122.2"/>
    <property type="RefSeq nucleotide sequence ID" value="NM_020632.3"/>
    <property type="RefSeq protein sequence ID" value="NP_065683.2"/>
</dbReference>
<dbReference type="UCSC" id="uc003vuf.4">
    <property type="organism name" value="human"/>
</dbReference>
<dbReference type="AGR" id="HGNC:866"/>
<dbReference type="CTD" id="50617"/>
<dbReference type="DisGeNET" id="50617"/>
<dbReference type="GeneCards" id="ATP6V0A4"/>
<dbReference type="GeneReviews" id="ATP6V0A4"/>
<dbReference type="HGNC" id="HGNC:866">
    <property type="gene designation" value="ATP6V0A4"/>
</dbReference>
<dbReference type="HPA" id="ENSG00000105929">
    <property type="expression patterns" value="Group enriched (kidney, salivary gland)"/>
</dbReference>
<dbReference type="MalaCards" id="ATP6V0A4"/>
<dbReference type="MIM" id="602722">
    <property type="type" value="phenotype"/>
</dbReference>
<dbReference type="MIM" id="605239">
    <property type="type" value="gene"/>
</dbReference>
<dbReference type="neXtProt" id="NX_Q9HBG4"/>
<dbReference type="OpenTargets" id="ENSG00000105929"/>
<dbReference type="Orphanet" id="402041">
    <property type="disease" value="Autosomal recessive distal renal tubular acidosis"/>
</dbReference>
<dbReference type="PharmGKB" id="PA25147"/>
<dbReference type="VEuPathDB" id="HostDB:ENSG00000105929"/>
<dbReference type="eggNOG" id="KOG2189">
    <property type="taxonomic scope" value="Eukaryota"/>
</dbReference>
<dbReference type="GeneTree" id="ENSGT00950000182881"/>
<dbReference type="HOGENOM" id="CLU_005230_0_2_1"/>
<dbReference type="InParanoid" id="Q9HBG4"/>
<dbReference type="OMA" id="HYVIHTI"/>
<dbReference type="OrthoDB" id="10264220at2759"/>
<dbReference type="PAN-GO" id="Q9HBG4">
    <property type="GO annotations" value="4 GO annotations based on evolutionary models"/>
</dbReference>
<dbReference type="PhylomeDB" id="Q9HBG4"/>
<dbReference type="TreeFam" id="TF300346"/>
<dbReference type="BioCyc" id="MetaCyc:ENSG00000105929-MONOMER"/>
<dbReference type="PathwayCommons" id="Q9HBG4"/>
<dbReference type="Reactome" id="R-HSA-1222556">
    <property type="pathway name" value="ROS and RNS production in phagocytes"/>
</dbReference>
<dbReference type="Reactome" id="R-HSA-77387">
    <property type="pathway name" value="Insulin receptor recycling"/>
</dbReference>
<dbReference type="Reactome" id="R-HSA-917977">
    <property type="pathway name" value="Transferrin endocytosis and recycling"/>
</dbReference>
<dbReference type="Reactome" id="R-HSA-983712">
    <property type="pathway name" value="Ion channel transport"/>
</dbReference>
<dbReference type="SignaLink" id="Q9HBG4"/>
<dbReference type="BioGRID-ORCS" id="50617">
    <property type="hits" value="18 hits in 1152 CRISPR screens"/>
</dbReference>
<dbReference type="ChiTaRS" id="ATP6V0A4">
    <property type="organism name" value="human"/>
</dbReference>
<dbReference type="GeneWiki" id="ATP6V0A4"/>
<dbReference type="GenomeRNAi" id="50617"/>
<dbReference type="Pharos" id="Q9HBG4">
    <property type="development level" value="Tbio"/>
</dbReference>
<dbReference type="PRO" id="PR:Q9HBG4"/>
<dbReference type="Proteomes" id="UP000005640">
    <property type="component" value="Chromosome 7"/>
</dbReference>
<dbReference type="RNAct" id="Q9HBG4">
    <property type="molecule type" value="protein"/>
</dbReference>
<dbReference type="Bgee" id="ENSG00000105929">
    <property type="expression patterns" value="Expressed in metanephros cortex and 109 other cell types or tissues"/>
</dbReference>
<dbReference type="ExpressionAtlas" id="Q9HBG4">
    <property type="expression patterns" value="baseline and differential"/>
</dbReference>
<dbReference type="GO" id="GO:0045177">
    <property type="term" value="C:apical part of cell"/>
    <property type="evidence" value="ECO:0000314"/>
    <property type="project" value="UniProtKB"/>
</dbReference>
<dbReference type="GO" id="GO:0016324">
    <property type="term" value="C:apical plasma membrane"/>
    <property type="evidence" value="ECO:0000314"/>
    <property type="project" value="UniProtKB"/>
</dbReference>
<dbReference type="GO" id="GO:0016323">
    <property type="term" value="C:basolateral plasma membrane"/>
    <property type="evidence" value="ECO:0007669"/>
    <property type="project" value="UniProtKB-SubCell"/>
</dbReference>
<dbReference type="GO" id="GO:0031526">
    <property type="term" value="C:brush border membrane"/>
    <property type="evidence" value="ECO:0000314"/>
    <property type="project" value="HGNC-UCL"/>
</dbReference>
<dbReference type="GO" id="GO:0005768">
    <property type="term" value="C:endosome"/>
    <property type="evidence" value="ECO:0000250"/>
    <property type="project" value="UniProtKB"/>
</dbReference>
<dbReference type="GO" id="GO:0010008">
    <property type="term" value="C:endosome membrane"/>
    <property type="evidence" value="ECO:0000304"/>
    <property type="project" value="Reactome"/>
</dbReference>
<dbReference type="GO" id="GO:0070062">
    <property type="term" value="C:extracellular exosome"/>
    <property type="evidence" value="ECO:0007005"/>
    <property type="project" value="UniProtKB"/>
</dbReference>
<dbReference type="GO" id="GO:0005765">
    <property type="term" value="C:lysosomal membrane"/>
    <property type="evidence" value="ECO:0007005"/>
    <property type="project" value="UniProtKB"/>
</dbReference>
<dbReference type="GO" id="GO:0030670">
    <property type="term" value="C:phagocytic vesicle membrane"/>
    <property type="evidence" value="ECO:0000304"/>
    <property type="project" value="Reactome"/>
</dbReference>
<dbReference type="GO" id="GO:0005886">
    <property type="term" value="C:plasma membrane"/>
    <property type="evidence" value="ECO:0000314"/>
    <property type="project" value="UniProtKB"/>
</dbReference>
<dbReference type="GO" id="GO:0033176">
    <property type="term" value="C:proton-transporting V-type ATPase complex"/>
    <property type="evidence" value="ECO:0000303"/>
    <property type="project" value="ComplexPortal"/>
</dbReference>
<dbReference type="GO" id="GO:0030672">
    <property type="term" value="C:synaptic vesicle membrane"/>
    <property type="evidence" value="ECO:0007669"/>
    <property type="project" value="Ensembl"/>
</dbReference>
<dbReference type="GO" id="GO:0016471">
    <property type="term" value="C:vacuolar proton-transporting V-type ATPase complex"/>
    <property type="evidence" value="ECO:0000314"/>
    <property type="project" value="HGNC-UCL"/>
</dbReference>
<dbReference type="GO" id="GO:0000220">
    <property type="term" value="C:vacuolar proton-transporting V-type ATPase, V0 domain"/>
    <property type="evidence" value="ECO:0007669"/>
    <property type="project" value="InterPro"/>
</dbReference>
<dbReference type="GO" id="GO:0051117">
    <property type="term" value="F:ATPase binding"/>
    <property type="evidence" value="ECO:0000353"/>
    <property type="project" value="UniProtKB"/>
</dbReference>
<dbReference type="GO" id="GO:0046961">
    <property type="term" value="F:proton-transporting ATPase activity, rotational mechanism"/>
    <property type="evidence" value="ECO:0007669"/>
    <property type="project" value="InterPro"/>
</dbReference>
<dbReference type="GO" id="GO:0051452">
    <property type="term" value="P:intracellular pH reduction"/>
    <property type="evidence" value="ECO:0000303"/>
    <property type="project" value="ComplexPortal"/>
</dbReference>
<dbReference type="GO" id="GO:0001503">
    <property type="term" value="P:ossification"/>
    <property type="evidence" value="ECO:0000315"/>
    <property type="project" value="HGNC-UCL"/>
</dbReference>
<dbReference type="GO" id="GO:1902600">
    <property type="term" value="P:proton transmembrane transport"/>
    <property type="evidence" value="ECO:0000315"/>
    <property type="project" value="HGNC-UCL"/>
</dbReference>
<dbReference type="GO" id="GO:0006885">
    <property type="term" value="P:regulation of pH"/>
    <property type="evidence" value="ECO:0000315"/>
    <property type="project" value="HGNC-UCL"/>
</dbReference>
<dbReference type="GO" id="GO:0097254">
    <property type="term" value="P:renal tubular secretion"/>
    <property type="evidence" value="ECO:0000315"/>
    <property type="project" value="HGNC-UCL"/>
</dbReference>
<dbReference type="GO" id="GO:0007605">
    <property type="term" value="P:sensory perception of sound"/>
    <property type="evidence" value="ECO:0000315"/>
    <property type="project" value="HGNC-UCL"/>
</dbReference>
<dbReference type="GO" id="GO:0097401">
    <property type="term" value="P:synaptic vesicle lumen acidification"/>
    <property type="evidence" value="ECO:0007669"/>
    <property type="project" value="Ensembl"/>
</dbReference>
<dbReference type="GO" id="GO:0007035">
    <property type="term" value="P:vacuolar acidification"/>
    <property type="evidence" value="ECO:0000318"/>
    <property type="project" value="GO_Central"/>
</dbReference>
<dbReference type="InterPro" id="IPR002490">
    <property type="entry name" value="V-ATPase_116kDa_su"/>
</dbReference>
<dbReference type="InterPro" id="IPR026028">
    <property type="entry name" value="V-type_ATPase_116kDa_su_euka"/>
</dbReference>
<dbReference type="PANTHER" id="PTHR11629:SF26">
    <property type="entry name" value="V-TYPE PROTON ATPASE 116 KDA SUBUNIT A 4"/>
    <property type="match status" value="1"/>
</dbReference>
<dbReference type="PANTHER" id="PTHR11629">
    <property type="entry name" value="VACUOLAR PROTON ATPASES"/>
    <property type="match status" value="1"/>
</dbReference>
<dbReference type="Pfam" id="PF01496">
    <property type="entry name" value="V_ATPase_I"/>
    <property type="match status" value="1"/>
</dbReference>
<dbReference type="PIRSF" id="PIRSF001293">
    <property type="entry name" value="ATP6V0A1"/>
    <property type="match status" value="1"/>
</dbReference>
<sequence length="840" mass="96386">MVSVFRSEEMCLSQLFLQVEAAYCCVAELGELGLVQFKDLNMNVNSFQRKFVNEVRRCESLERILRFLEDEMQNEIVVQLLEKSPLTPLPREMITLETVLEKLEGELQEANQNQQALKQSFLELTELKYLLKKTQDFFETETNLADDFFTEDTSGLLELKAVPAYMTGKLGFIAGVINRERMASFERLLWRICRGNVYLKFSEMDAPLEDPVTKEEIQKNIFIIFYQGEQLRQKIKKICDGFRATVYPCPEPAVERREMLESVNVRLEDLITVITQTESHRQRLLQEAAANWHSWLIKVQKMKAVYHILNMCNIDVTQQCVIAEIWFPVADATRIKRALEQGMELSGSSMAPIMTTVQSKTAPPTFNRTNKFTAGFQNIVDAYGVGSYREINPAPYTIITFPFLFAVMFGDCGHGTVMLLAALWMILNERRLLSQKTDNEIWNTFFHGRYLILLMGIFSIYTGLIYNDCFSKSLNIFGSSWSVQPMFRNGTWNTHVMEESLYLQLDPAIPGVYFGNPYPFGIDPIWNLASNKLTFLNSYKMKMSVILGIVQMVFGVILSLFNHIYFRRTLNIILQFIPEMIFILCLFGYLVFMIIFKWCCFDVHVSQHAPSILIHFINMFLFNYSDSSNAPLYKHQQEVQSFFVVMALISVPWMLLIKPFILRASHRKSQLQASRIQEDATENIEGDSSSPSSRSGQRTSADTHGALDDHGEEFNFGDVFVHQAIHTIEYCLGCISNTASYLRLWALSLAHAQLSEVLWTMVMNSGLQTRGWGGIVGVFIIFAVFAVLTVAILLIMEGLSAFLHALRLHWVEFQNKFYVGDGYKFSPFSFKHILDGTAEE</sequence>
<proteinExistence type="evidence at protein level"/>
<keyword id="KW-0002">3D-structure</keyword>
<keyword id="KW-1003">Cell membrane</keyword>
<keyword id="KW-0225">Disease variant</keyword>
<keyword id="KW-0375">Hydrogen ion transport</keyword>
<keyword id="KW-0406">Ion transport</keyword>
<keyword id="KW-0472">Membrane</keyword>
<keyword id="KW-1267">Proteomics identification</keyword>
<keyword id="KW-1185">Reference proteome</keyword>
<keyword id="KW-0812">Transmembrane</keyword>
<keyword id="KW-1133">Transmembrane helix</keyword>
<keyword id="KW-0813">Transport</keyword>
<gene>
    <name type="primary">ATP6V0A4</name>
    <name type="synonym">ATP6N1B</name>
    <name type="synonym">ATP6N2</name>
</gene>
<reference key="1">
    <citation type="journal article" date="2000" name="Nat. Genet.">
        <title>Mutations in ATP6N1B, encoding a new kidney vacuolar proton pump 116-kD subunit, cause recessive distal renal tubular acidosis with preserved hearing.</title>
        <authorList>
            <person name="Smith A.N."/>
            <person name="Skaug J."/>
            <person name="Choate K.A."/>
            <person name="Nayir A."/>
            <person name="Bakkaloglu A."/>
            <person name="Ozen S."/>
            <person name="Hulton S.A."/>
            <person name="Sanjad S.A."/>
            <person name="Al-Sabban E.A."/>
            <person name="Lifton R.P."/>
            <person name="Scherer S.W."/>
            <person name="Karet F.E."/>
        </authorList>
    </citation>
    <scope>NUCLEOTIDE SEQUENCE [MRNA]</scope>
    <scope>FUNCTION</scope>
    <scope>SUBCELLULAR LOCATION</scope>
    <scope>VARIANTS DRTA3 LEU-524; THR-580 AND ARG-820</scope>
    <scope>VARIANT ALA-2</scope>
    <source>
        <tissue>Kidney</tissue>
    </source>
</reference>
<reference key="2">
    <citation type="journal article" date="2004" name="Nat. Genet.">
        <title>Complete sequencing and characterization of 21,243 full-length human cDNAs.</title>
        <authorList>
            <person name="Ota T."/>
            <person name="Suzuki Y."/>
            <person name="Nishikawa T."/>
            <person name="Otsuki T."/>
            <person name="Sugiyama T."/>
            <person name="Irie R."/>
            <person name="Wakamatsu A."/>
            <person name="Hayashi K."/>
            <person name="Sato H."/>
            <person name="Nagai K."/>
            <person name="Kimura K."/>
            <person name="Makita H."/>
            <person name="Sekine M."/>
            <person name="Obayashi M."/>
            <person name="Nishi T."/>
            <person name="Shibahara T."/>
            <person name="Tanaka T."/>
            <person name="Ishii S."/>
            <person name="Yamamoto J."/>
            <person name="Saito K."/>
            <person name="Kawai Y."/>
            <person name="Isono Y."/>
            <person name="Nakamura Y."/>
            <person name="Nagahari K."/>
            <person name="Murakami K."/>
            <person name="Yasuda T."/>
            <person name="Iwayanagi T."/>
            <person name="Wagatsuma M."/>
            <person name="Shiratori A."/>
            <person name="Sudo H."/>
            <person name="Hosoiri T."/>
            <person name="Kaku Y."/>
            <person name="Kodaira H."/>
            <person name="Kondo H."/>
            <person name="Sugawara M."/>
            <person name="Takahashi M."/>
            <person name="Kanda K."/>
            <person name="Yokoi T."/>
            <person name="Furuya T."/>
            <person name="Kikkawa E."/>
            <person name="Omura Y."/>
            <person name="Abe K."/>
            <person name="Kamihara K."/>
            <person name="Katsuta N."/>
            <person name="Sato K."/>
            <person name="Tanikawa M."/>
            <person name="Yamazaki M."/>
            <person name="Ninomiya K."/>
            <person name="Ishibashi T."/>
            <person name="Yamashita H."/>
            <person name="Murakawa K."/>
            <person name="Fujimori K."/>
            <person name="Tanai H."/>
            <person name="Kimata M."/>
            <person name="Watanabe M."/>
            <person name="Hiraoka S."/>
            <person name="Chiba Y."/>
            <person name="Ishida S."/>
            <person name="Ono Y."/>
            <person name="Takiguchi S."/>
            <person name="Watanabe S."/>
            <person name="Yosida M."/>
            <person name="Hotuta T."/>
            <person name="Kusano J."/>
            <person name="Kanehori K."/>
            <person name="Takahashi-Fujii A."/>
            <person name="Hara H."/>
            <person name="Tanase T.-O."/>
            <person name="Nomura Y."/>
            <person name="Togiya S."/>
            <person name="Komai F."/>
            <person name="Hara R."/>
            <person name="Takeuchi K."/>
            <person name="Arita M."/>
            <person name="Imose N."/>
            <person name="Musashino K."/>
            <person name="Yuuki H."/>
            <person name="Oshima A."/>
            <person name="Sasaki N."/>
            <person name="Aotsuka S."/>
            <person name="Yoshikawa Y."/>
            <person name="Matsunawa H."/>
            <person name="Ichihara T."/>
            <person name="Shiohata N."/>
            <person name="Sano S."/>
            <person name="Moriya S."/>
            <person name="Momiyama H."/>
            <person name="Satoh N."/>
            <person name="Takami S."/>
            <person name="Terashima Y."/>
            <person name="Suzuki O."/>
            <person name="Nakagawa S."/>
            <person name="Senoh A."/>
            <person name="Mizoguchi H."/>
            <person name="Goto Y."/>
            <person name="Shimizu F."/>
            <person name="Wakebe H."/>
            <person name="Hishigaki H."/>
            <person name="Watanabe T."/>
            <person name="Sugiyama A."/>
            <person name="Takemoto M."/>
            <person name="Kawakami B."/>
            <person name="Yamazaki M."/>
            <person name="Watanabe K."/>
            <person name="Kumagai A."/>
            <person name="Itakura S."/>
            <person name="Fukuzumi Y."/>
            <person name="Fujimori Y."/>
            <person name="Komiyama M."/>
            <person name="Tashiro H."/>
            <person name="Tanigami A."/>
            <person name="Fujiwara T."/>
            <person name="Ono T."/>
            <person name="Yamada K."/>
            <person name="Fujii Y."/>
            <person name="Ozaki K."/>
            <person name="Hirao M."/>
            <person name="Ohmori Y."/>
            <person name="Kawabata A."/>
            <person name="Hikiji T."/>
            <person name="Kobatake N."/>
            <person name="Inagaki H."/>
            <person name="Ikema Y."/>
            <person name="Okamoto S."/>
            <person name="Okitani R."/>
            <person name="Kawakami T."/>
            <person name="Noguchi S."/>
            <person name="Itoh T."/>
            <person name="Shigeta K."/>
            <person name="Senba T."/>
            <person name="Matsumura K."/>
            <person name="Nakajima Y."/>
            <person name="Mizuno T."/>
            <person name="Morinaga M."/>
            <person name="Sasaki M."/>
            <person name="Togashi T."/>
            <person name="Oyama M."/>
            <person name="Hata H."/>
            <person name="Watanabe M."/>
            <person name="Komatsu T."/>
            <person name="Mizushima-Sugano J."/>
            <person name="Satoh T."/>
            <person name="Shirai Y."/>
            <person name="Takahashi Y."/>
            <person name="Nakagawa K."/>
            <person name="Okumura K."/>
            <person name="Nagase T."/>
            <person name="Nomura N."/>
            <person name="Kikuchi H."/>
            <person name="Masuho Y."/>
            <person name="Yamashita R."/>
            <person name="Nakai K."/>
            <person name="Yada T."/>
            <person name="Nakamura Y."/>
            <person name="Ohara O."/>
            <person name="Isogai T."/>
            <person name="Sugano S."/>
        </authorList>
    </citation>
    <scope>NUCLEOTIDE SEQUENCE [LARGE SCALE MRNA]</scope>
    <scope>VARIANT ALA-2</scope>
    <source>
        <tissue>Trachea</tissue>
    </source>
</reference>
<reference key="3">
    <citation type="journal article" date="2003" name="Nature">
        <title>The DNA sequence of human chromosome 7.</title>
        <authorList>
            <person name="Hillier L.W."/>
            <person name="Fulton R.S."/>
            <person name="Fulton L.A."/>
            <person name="Graves T.A."/>
            <person name="Pepin K.H."/>
            <person name="Wagner-McPherson C."/>
            <person name="Layman D."/>
            <person name="Maas J."/>
            <person name="Jaeger S."/>
            <person name="Walker R."/>
            <person name="Wylie K."/>
            <person name="Sekhon M."/>
            <person name="Becker M.C."/>
            <person name="O'Laughlin M.D."/>
            <person name="Schaller M.E."/>
            <person name="Fewell G.A."/>
            <person name="Delehaunty K.D."/>
            <person name="Miner T.L."/>
            <person name="Nash W.E."/>
            <person name="Cordes M."/>
            <person name="Du H."/>
            <person name="Sun H."/>
            <person name="Edwards J."/>
            <person name="Bradshaw-Cordum H."/>
            <person name="Ali J."/>
            <person name="Andrews S."/>
            <person name="Isak A."/>
            <person name="Vanbrunt A."/>
            <person name="Nguyen C."/>
            <person name="Du F."/>
            <person name="Lamar B."/>
            <person name="Courtney L."/>
            <person name="Kalicki J."/>
            <person name="Ozersky P."/>
            <person name="Bielicki L."/>
            <person name="Scott K."/>
            <person name="Holmes A."/>
            <person name="Harkins R."/>
            <person name="Harris A."/>
            <person name="Strong C.M."/>
            <person name="Hou S."/>
            <person name="Tomlinson C."/>
            <person name="Dauphin-Kohlberg S."/>
            <person name="Kozlowicz-Reilly A."/>
            <person name="Leonard S."/>
            <person name="Rohlfing T."/>
            <person name="Rock S.M."/>
            <person name="Tin-Wollam A.-M."/>
            <person name="Abbott A."/>
            <person name="Minx P."/>
            <person name="Maupin R."/>
            <person name="Strowmatt C."/>
            <person name="Latreille P."/>
            <person name="Miller N."/>
            <person name="Johnson D."/>
            <person name="Murray J."/>
            <person name="Woessner J.P."/>
            <person name="Wendl M.C."/>
            <person name="Yang S.-P."/>
            <person name="Schultz B.R."/>
            <person name="Wallis J.W."/>
            <person name="Spieth J."/>
            <person name="Bieri T.A."/>
            <person name="Nelson J.O."/>
            <person name="Berkowicz N."/>
            <person name="Wohldmann P.E."/>
            <person name="Cook L.L."/>
            <person name="Hickenbotham M.T."/>
            <person name="Eldred J."/>
            <person name="Williams D."/>
            <person name="Bedell J.A."/>
            <person name="Mardis E.R."/>
            <person name="Clifton S.W."/>
            <person name="Chissoe S.L."/>
            <person name="Marra M.A."/>
            <person name="Raymond C."/>
            <person name="Haugen E."/>
            <person name="Gillett W."/>
            <person name="Zhou Y."/>
            <person name="James R."/>
            <person name="Phelps K."/>
            <person name="Iadanoto S."/>
            <person name="Bubb K."/>
            <person name="Simms E."/>
            <person name="Levy R."/>
            <person name="Clendenning J."/>
            <person name="Kaul R."/>
            <person name="Kent W.J."/>
            <person name="Furey T.S."/>
            <person name="Baertsch R.A."/>
            <person name="Brent M.R."/>
            <person name="Keibler E."/>
            <person name="Flicek P."/>
            <person name="Bork P."/>
            <person name="Suyama M."/>
            <person name="Bailey J.A."/>
            <person name="Portnoy M.E."/>
            <person name="Torrents D."/>
            <person name="Chinwalla A.T."/>
            <person name="Gish W.R."/>
            <person name="Eddy S.R."/>
            <person name="McPherson J.D."/>
            <person name="Olson M.V."/>
            <person name="Eichler E.E."/>
            <person name="Green E.D."/>
            <person name="Waterston R.H."/>
            <person name="Wilson R.K."/>
        </authorList>
    </citation>
    <scope>NUCLEOTIDE SEQUENCE [LARGE SCALE GENOMIC DNA]</scope>
</reference>
<reference key="4">
    <citation type="journal article" date="2003" name="Science">
        <title>Human chromosome 7: DNA sequence and biology.</title>
        <authorList>
            <person name="Scherer S.W."/>
            <person name="Cheung J."/>
            <person name="MacDonald J.R."/>
            <person name="Osborne L.R."/>
            <person name="Nakabayashi K."/>
            <person name="Herbrick J.-A."/>
            <person name="Carson A.R."/>
            <person name="Parker-Katiraee L."/>
            <person name="Skaug J."/>
            <person name="Khaja R."/>
            <person name="Zhang J."/>
            <person name="Hudek A.K."/>
            <person name="Li M."/>
            <person name="Haddad M."/>
            <person name="Duggan G.E."/>
            <person name="Fernandez B.A."/>
            <person name="Kanematsu E."/>
            <person name="Gentles S."/>
            <person name="Christopoulos C.C."/>
            <person name="Choufani S."/>
            <person name="Kwasnicka D."/>
            <person name="Zheng X.H."/>
            <person name="Lai Z."/>
            <person name="Nusskern D.R."/>
            <person name="Zhang Q."/>
            <person name="Gu Z."/>
            <person name="Lu F."/>
            <person name="Zeesman S."/>
            <person name="Nowaczyk M.J."/>
            <person name="Teshima I."/>
            <person name="Chitayat D."/>
            <person name="Shuman C."/>
            <person name="Weksberg R."/>
            <person name="Zackai E.H."/>
            <person name="Grebe T.A."/>
            <person name="Cox S.R."/>
            <person name="Kirkpatrick S.J."/>
            <person name="Rahman N."/>
            <person name="Friedman J.M."/>
            <person name="Heng H.H.Q."/>
            <person name="Pelicci P.G."/>
            <person name="Lo-Coco F."/>
            <person name="Belloni E."/>
            <person name="Shaffer L.G."/>
            <person name="Pober B."/>
            <person name="Morton C.C."/>
            <person name="Gusella J.F."/>
            <person name="Bruns G.A.P."/>
            <person name="Korf B.R."/>
            <person name="Quade B.J."/>
            <person name="Ligon A.H."/>
            <person name="Ferguson H."/>
            <person name="Higgins A.W."/>
            <person name="Leach N.T."/>
            <person name="Herrick S.R."/>
            <person name="Lemyre E."/>
            <person name="Farra C.G."/>
            <person name="Kim H.-G."/>
            <person name="Summers A.M."/>
            <person name="Gripp K.W."/>
            <person name="Roberts W."/>
            <person name="Szatmari P."/>
            <person name="Winsor E.J.T."/>
            <person name="Grzeschik K.-H."/>
            <person name="Teebi A."/>
            <person name="Minassian B.A."/>
            <person name="Kere J."/>
            <person name="Armengol L."/>
            <person name="Pujana M.A."/>
            <person name="Estivill X."/>
            <person name="Wilson M.D."/>
            <person name="Koop B.F."/>
            <person name="Tosi S."/>
            <person name="Moore G.E."/>
            <person name="Boright A.P."/>
            <person name="Zlotorynski E."/>
            <person name="Kerem B."/>
            <person name="Kroisel P.M."/>
            <person name="Petek E."/>
            <person name="Oscier D.G."/>
            <person name="Mould S.J."/>
            <person name="Doehner H."/>
            <person name="Doehner K."/>
            <person name="Rommens J.M."/>
            <person name="Vincent J.B."/>
            <person name="Venter J.C."/>
            <person name="Li P.W."/>
            <person name="Mural R.J."/>
            <person name="Adams M.D."/>
            <person name="Tsui L.-C."/>
        </authorList>
    </citation>
    <scope>NUCLEOTIDE SEQUENCE [LARGE SCALE GENOMIC DNA]</scope>
</reference>
<reference key="5">
    <citation type="submission" date="2005-07" db="EMBL/GenBank/DDBJ databases">
        <authorList>
            <person name="Mural R.J."/>
            <person name="Istrail S."/>
            <person name="Sutton G."/>
            <person name="Florea L."/>
            <person name="Halpern A.L."/>
            <person name="Mobarry C.M."/>
            <person name="Lippert R."/>
            <person name="Walenz B."/>
            <person name="Shatkay H."/>
            <person name="Dew I."/>
            <person name="Miller J.R."/>
            <person name="Flanigan M.J."/>
            <person name="Edwards N.J."/>
            <person name="Bolanos R."/>
            <person name="Fasulo D."/>
            <person name="Halldorsson B.V."/>
            <person name="Hannenhalli S."/>
            <person name="Turner R."/>
            <person name="Yooseph S."/>
            <person name="Lu F."/>
            <person name="Nusskern D.R."/>
            <person name="Shue B.C."/>
            <person name="Zheng X.H."/>
            <person name="Zhong F."/>
            <person name="Delcher A.L."/>
            <person name="Huson D.H."/>
            <person name="Kravitz S.A."/>
            <person name="Mouchard L."/>
            <person name="Reinert K."/>
            <person name="Remington K.A."/>
            <person name="Clark A.G."/>
            <person name="Waterman M.S."/>
            <person name="Eichler E.E."/>
            <person name="Adams M.D."/>
            <person name="Hunkapiller M.W."/>
            <person name="Myers E.W."/>
            <person name="Venter J.C."/>
        </authorList>
    </citation>
    <scope>NUCLEOTIDE SEQUENCE [LARGE SCALE GENOMIC DNA]</scope>
</reference>
<reference key="6">
    <citation type="journal article" date="2004" name="Genome Res.">
        <title>The status, quality, and expansion of the NIH full-length cDNA project: the Mammalian Gene Collection (MGC).</title>
        <authorList>
            <consortium name="The MGC Project Team"/>
        </authorList>
    </citation>
    <scope>NUCLEOTIDE SEQUENCE [LARGE SCALE MRNA]</scope>
</reference>
<reference key="7">
    <citation type="journal article" date="2002" name="J. Med. Genet.">
        <title>Novel ATP6V1B1 and ATP6V0A4 mutations in autosomal recessive distal renal tubular acidosis with new evidence for hearing loss.</title>
        <authorList>
            <person name="Stover E.H."/>
            <person name="Borthwick K.J."/>
            <person name="Bavalia C."/>
            <person name="Eady N."/>
            <person name="Fritz D.M."/>
            <person name="Rungroj N."/>
            <person name="Giersch A.B.S."/>
            <person name="Morton C.C."/>
            <person name="Axon P.R."/>
            <person name="Akil I."/>
            <person name="Al-Sabban E.A."/>
            <person name="Baguley D.M."/>
            <person name="Bianca S."/>
            <person name="Bakkaloglu A."/>
            <person name="Bircan Z."/>
            <person name="Chauveau D."/>
            <person name="Clermont M.-J."/>
            <person name="Guala A."/>
            <person name="Hulton S.A."/>
            <person name="Kroes H."/>
            <person name="Li Volti G."/>
            <person name="Mir S."/>
            <person name="Mocan H."/>
            <person name="Nayir A."/>
            <person name="Ozen S."/>
            <person name="Rodriguez Soriano J."/>
            <person name="Sanjad S.A."/>
            <person name="Tasic V."/>
            <person name="Taylor C.M."/>
            <person name="Topaloglu R."/>
            <person name="Smith A.N."/>
            <person name="Karet F.E."/>
        </authorList>
    </citation>
    <scope>FUNCTION</scope>
    <scope>VARIANTS DRTA3 ASP-175; LYS-237 DEL; HIS-449 AND GLN-807</scope>
</reference>
<reference key="8">
    <citation type="journal article" date="2008" name="Proc. Natl. Acad. Sci. U.S.A.">
        <title>A quantitative atlas of mitotic phosphorylation.</title>
        <authorList>
            <person name="Dephoure N."/>
            <person name="Zhou C."/>
            <person name="Villen J."/>
            <person name="Beausoleil S.A."/>
            <person name="Bakalarski C.E."/>
            <person name="Elledge S.J."/>
            <person name="Gygi S.P."/>
        </authorList>
    </citation>
    <scope>IDENTIFICATION BY MASS SPECTROMETRY [LARGE SCALE ANALYSIS]</scope>
    <source>
        <tissue>Cervix carcinoma</tissue>
    </source>
</reference>
<reference key="9">
    <citation type="journal article" date="2010" name="Sci. Signal.">
        <title>Quantitative phosphoproteomics reveals widespread full phosphorylation site occupancy during mitosis.</title>
        <authorList>
            <person name="Olsen J.V."/>
            <person name="Vermeulen M."/>
            <person name="Santamaria A."/>
            <person name="Kumar C."/>
            <person name="Miller M.L."/>
            <person name="Jensen L.J."/>
            <person name="Gnad F."/>
            <person name="Cox J."/>
            <person name="Jensen T.S."/>
            <person name="Nigg E.A."/>
            <person name="Brunak S."/>
            <person name="Mann M."/>
        </authorList>
    </citation>
    <scope>IDENTIFICATION BY MASS SPECTROMETRY [LARGE SCALE ANALYSIS]</scope>
    <source>
        <tissue>Cervix carcinoma</tissue>
    </source>
</reference>
<protein>
    <recommendedName>
        <fullName>V-type proton ATPase 116 kDa subunit a 4</fullName>
        <shortName>V-ATPase 116 kDa isoform a 4</shortName>
    </recommendedName>
    <alternativeName>
        <fullName>Vacuolar proton translocating ATPase 116 kDa subunit a isoform 4</fullName>
    </alternativeName>
    <alternativeName>
        <fullName>Vacuolar proton translocating ATPase 116 kDa subunit a kidney isoform</fullName>
    </alternativeName>
</protein>
<accession>Q9HBG4</accession>
<accession>A4D1R4</accession>
<accession>A8KA80</accession>
<accession>Q32M47</accession>
<name>VPP4_HUMAN</name>
<evidence type="ECO:0000250" key="1">
    <source>
        <dbReference type="UniProtKB" id="Q29466"/>
    </source>
</evidence>
<evidence type="ECO:0000250" key="2">
    <source>
        <dbReference type="UniProtKB" id="Q920R6"/>
    </source>
</evidence>
<evidence type="ECO:0000250" key="3">
    <source>
        <dbReference type="UniProtKB" id="Q93050"/>
    </source>
</evidence>
<evidence type="ECO:0000255" key="4"/>
<evidence type="ECO:0000256" key="5">
    <source>
        <dbReference type="SAM" id="MobiDB-lite"/>
    </source>
</evidence>
<evidence type="ECO:0000269" key="6">
    <source>
    </source>
</evidence>
<evidence type="ECO:0000269" key="7">
    <source>
    </source>
</evidence>
<evidence type="ECO:0000269" key="8">
    <source>
    </source>
</evidence>
<evidence type="ECO:0000305" key="9"/>
<organism>
    <name type="scientific">Homo sapiens</name>
    <name type="common">Human</name>
    <dbReference type="NCBI Taxonomy" id="9606"/>
    <lineage>
        <taxon>Eukaryota</taxon>
        <taxon>Metazoa</taxon>
        <taxon>Chordata</taxon>
        <taxon>Craniata</taxon>
        <taxon>Vertebrata</taxon>
        <taxon>Euteleostomi</taxon>
        <taxon>Mammalia</taxon>
        <taxon>Eutheria</taxon>
        <taxon>Euarchontoglires</taxon>
        <taxon>Primates</taxon>
        <taxon>Haplorrhini</taxon>
        <taxon>Catarrhini</taxon>
        <taxon>Hominidae</taxon>
        <taxon>Homo</taxon>
    </lineage>
</organism>
<feature type="chain" id="PRO_0000119219" description="V-type proton ATPase 116 kDa subunit a 4">
    <location>
        <begin position="1"/>
        <end position="840"/>
    </location>
</feature>
<feature type="topological domain" description="Cytoplasmic" evidence="4">
    <location>
        <begin position="1"/>
        <end position="390"/>
    </location>
</feature>
<feature type="transmembrane region" description="Helical" evidence="4">
    <location>
        <begin position="391"/>
        <end position="409"/>
    </location>
</feature>
<feature type="topological domain" description="Vacuolar" evidence="4">
    <location>
        <begin position="410"/>
        <end position="411"/>
    </location>
</feature>
<feature type="transmembrane region" description="Helical" evidence="4">
    <location>
        <begin position="412"/>
        <end position="428"/>
    </location>
</feature>
<feature type="topological domain" description="Cytoplasmic" evidence="4">
    <location>
        <begin position="429"/>
        <end position="443"/>
    </location>
</feature>
<feature type="transmembrane region" description="Helical" evidence="4">
    <location>
        <begin position="444"/>
        <end position="473"/>
    </location>
</feature>
<feature type="topological domain" description="Vacuolar" evidence="4">
    <location>
        <begin position="474"/>
        <end position="538"/>
    </location>
</feature>
<feature type="transmembrane region" description="Helical" evidence="4">
    <location>
        <begin position="539"/>
        <end position="558"/>
    </location>
</feature>
<feature type="topological domain" description="Cytoplasmic" evidence="4">
    <location>
        <begin position="559"/>
        <end position="576"/>
    </location>
</feature>
<feature type="transmembrane region" description="Helical" evidence="4">
    <location>
        <begin position="577"/>
        <end position="597"/>
    </location>
</feature>
<feature type="topological domain" description="Vacuolar" evidence="4">
    <location>
        <begin position="598"/>
        <end position="642"/>
    </location>
</feature>
<feature type="transmembrane region" description="Helical" evidence="4">
    <location>
        <begin position="643"/>
        <end position="662"/>
    </location>
</feature>
<feature type="topological domain" description="Cytoplasmic" evidence="4">
    <location>
        <begin position="663"/>
        <end position="727"/>
    </location>
</feature>
<feature type="transmembrane region" description="Helical" evidence="4">
    <location>
        <begin position="728"/>
        <end position="752"/>
    </location>
</feature>
<feature type="topological domain" description="Vacuolar" evidence="4">
    <location>
        <begin position="753"/>
        <end position="773"/>
    </location>
</feature>
<feature type="transmembrane region" description="Helical" evidence="4">
    <location>
        <begin position="774"/>
        <end position="812"/>
    </location>
</feature>
<feature type="topological domain" description="Cytoplasmic" evidence="4">
    <location>
        <begin position="813"/>
        <end position="840"/>
    </location>
</feature>
<feature type="region of interest" description="Disordered" evidence="5">
    <location>
        <begin position="675"/>
        <end position="704"/>
    </location>
</feature>
<feature type="sequence variant" id="VAR_020992" description="In dbSNP:rs10258719." evidence="6 8">
    <original>V</original>
    <variation>A</variation>
    <location>
        <position position="2"/>
    </location>
</feature>
<feature type="sequence variant" id="VAR_020993" description="In DRTA3." evidence="7">
    <original>G</original>
    <variation>D</variation>
    <location>
        <position position="175"/>
    </location>
</feature>
<feature type="sequence variant" id="VAR_020994" description="In DRTA3." evidence="7">
    <location>
        <position position="237"/>
    </location>
</feature>
<feature type="sequence variant" id="VAR_020995" description="In DRTA3; dbSNP:rs1443883930." evidence="7">
    <original>R</original>
    <variation>H</variation>
    <location>
        <position position="449"/>
    </location>
</feature>
<feature type="sequence variant" id="VAR_017255" description="In DRTA3; uncertain significance; dbSNP:rs121908368." evidence="6">
    <original>P</original>
    <variation>L</variation>
    <location>
        <position position="524"/>
    </location>
</feature>
<feature type="sequence variant" id="VAR_066612" description="In dbSNP:rs1026435.">
    <original>F</original>
    <variation>L</variation>
    <location>
        <position position="554"/>
    </location>
</feature>
<feature type="sequence variant" id="VAR_017256" description="In DRTA3; benign; dbSNP:rs3807153." evidence="6">
    <original>M</original>
    <variation>T</variation>
    <location>
        <position position="580"/>
    </location>
</feature>
<feature type="sequence variant" id="VAR_066613" description="In dbSNP:rs3807154.">
    <original>H</original>
    <variation>Q</variation>
    <location>
        <position position="604"/>
    </location>
</feature>
<feature type="sequence variant" id="VAR_020996" description="In DRTA3; dbSNP:rs28939081." evidence="7">
    <original>R</original>
    <variation>Q</variation>
    <location>
        <position position="807"/>
    </location>
</feature>
<feature type="sequence variant" id="VAR_017257" description="In DRTA3; dbSNP:rs267606671." evidence="6">
    <original>G</original>
    <variation>R</variation>
    <location>
        <position position="820"/>
    </location>
</feature>
<feature type="sequence conflict" description="In Ref. 6; AAI09305/AAI09306." evidence="9" ref="6">
    <original>P</original>
    <variation>R</variation>
    <location>
        <position position="252"/>
    </location>
</feature>